<keyword id="KW-0119">Carbohydrate metabolism</keyword>
<keyword id="KW-0963">Cytoplasm</keyword>
<keyword id="KW-0378">Hydrolase</keyword>
<keyword id="KW-0460">Magnesium</keyword>
<keyword id="KW-0479">Metal-binding</keyword>
<keyword id="KW-1185">Reference proteome</keyword>
<gene>
    <name evidence="1" type="primary">fbp2</name>
    <name type="synonym">cbbF2</name>
    <name type="synonym">cbbFC</name>
    <name type="synonym">cfxF</name>
    <name type="ordered locus">H16_B1390</name>
</gene>
<accession>P19911</accession>
<accession>Q0K1E5</accession>
<dbReference type="EC" id="3.1.3.11" evidence="1"/>
<dbReference type="EMBL" id="U16791">
    <property type="protein sequence ID" value="AAA69975.1"/>
    <property type="molecule type" value="Genomic_DNA"/>
</dbReference>
<dbReference type="EMBL" id="AM260480">
    <property type="protein sequence ID" value="CAJ96179.1"/>
    <property type="molecule type" value="Genomic_DNA"/>
</dbReference>
<dbReference type="EMBL" id="M33563">
    <property type="protein sequence ID" value="AAA21958.1"/>
    <property type="molecule type" value="Genomic_DNA"/>
</dbReference>
<dbReference type="PIR" id="I39556">
    <property type="entry name" value="I39556"/>
</dbReference>
<dbReference type="RefSeq" id="WP_011617202.1">
    <property type="nucleotide sequence ID" value="NC_008314.1"/>
</dbReference>
<dbReference type="SMR" id="P19911"/>
<dbReference type="STRING" id="381666.H16_B1390"/>
<dbReference type="KEGG" id="reh:H16_B1390"/>
<dbReference type="eggNOG" id="COG0158">
    <property type="taxonomic scope" value="Bacteria"/>
</dbReference>
<dbReference type="HOGENOM" id="CLU_039977_0_0_4"/>
<dbReference type="OrthoDB" id="9806756at2"/>
<dbReference type="UniPathway" id="UPA00138"/>
<dbReference type="Proteomes" id="UP000008210">
    <property type="component" value="Chromosome 2"/>
</dbReference>
<dbReference type="GO" id="GO:0005829">
    <property type="term" value="C:cytosol"/>
    <property type="evidence" value="ECO:0007669"/>
    <property type="project" value="TreeGrafter"/>
</dbReference>
<dbReference type="GO" id="GO:0042132">
    <property type="term" value="F:fructose 1,6-bisphosphate 1-phosphatase activity"/>
    <property type="evidence" value="ECO:0007669"/>
    <property type="project" value="UniProtKB-UniRule"/>
</dbReference>
<dbReference type="GO" id="GO:0000287">
    <property type="term" value="F:magnesium ion binding"/>
    <property type="evidence" value="ECO:0007669"/>
    <property type="project" value="UniProtKB-UniRule"/>
</dbReference>
<dbReference type="GO" id="GO:0030388">
    <property type="term" value="P:fructose 1,6-bisphosphate metabolic process"/>
    <property type="evidence" value="ECO:0007669"/>
    <property type="project" value="TreeGrafter"/>
</dbReference>
<dbReference type="GO" id="GO:0006002">
    <property type="term" value="P:fructose 6-phosphate metabolic process"/>
    <property type="evidence" value="ECO:0007669"/>
    <property type="project" value="TreeGrafter"/>
</dbReference>
<dbReference type="GO" id="GO:0006000">
    <property type="term" value="P:fructose metabolic process"/>
    <property type="evidence" value="ECO:0007669"/>
    <property type="project" value="TreeGrafter"/>
</dbReference>
<dbReference type="GO" id="GO:0006094">
    <property type="term" value="P:gluconeogenesis"/>
    <property type="evidence" value="ECO:0007669"/>
    <property type="project" value="UniProtKB-UniRule"/>
</dbReference>
<dbReference type="GO" id="GO:0005986">
    <property type="term" value="P:sucrose biosynthetic process"/>
    <property type="evidence" value="ECO:0007669"/>
    <property type="project" value="TreeGrafter"/>
</dbReference>
<dbReference type="CDD" id="cd00354">
    <property type="entry name" value="FBPase"/>
    <property type="match status" value="1"/>
</dbReference>
<dbReference type="FunFam" id="3.30.540.10:FF:000002">
    <property type="entry name" value="Fructose-1,6-bisphosphatase class 1"/>
    <property type="match status" value="1"/>
</dbReference>
<dbReference type="FunFam" id="3.40.190.80:FF:000011">
    <property type="entry name" value="Fructose-1,6-bisphosphatase class 1"/>
    <property type="match status" value="1"/>
</dbReference>
<dbReference type="Gene3D" id="3.40.190.80">
    <property type="match status" value="1"/>
</dbReference>
<dbReference type="Gene3D" id="3.30.540.10">
    <property type="entry name" value="Fructose-1,6-Bisphosphatase, subunit A, domain 1"/>
    <property type="match status" value="1"/>
</dbReference>
<dbReference type="HAMAP" id="MF_01855">
    <property type="entry name" value="FBPase_class1"/>
    <property type="match status" value="1"/>
</dbReference>
<dbReference type="InterPro" id="IPR044015">
    <property type="entry name" value="FBPase_C_dom"/>
</dbReference>
<dbReference type="InterPro" id="IPR000146">
    <property type="entry name" value="FBPase_class-1"/>
</dbReference>
<dbReference type="InterPro" id="IPR033391">
    <property type="entry name" value="FBPase_N"/>
</dbReference>
<dbReference type="InterPro" id="IPR028343">
    <property type="entry name" value="FBPtase"/>
</dbReference>
<dbReference type="InterPro" id="IPR020548">
    <property type="entry name" value="Fructose_bisphosphatase_AS"/>
</dbReference>
<dbReference type="NCBIfam" id="NF006779">
    <property type="entry name" value="PRK09293.1-3"/>
    <property type="match status" value="1"/>
</dbReference>
<dbReference type="NCBIfam" id="NF006780">
    <property type="entry name" value="PRK09293.1-4"/>
    <property type="match status" value="1"/>
</dbReference>
<dbReference type="PANTHER" id="PTHR11556">
    <property type="entry name" value="FRUCTOSE-1,6-BISPHOSPHATASE-RELATED"/>
    <property type="match status" value="1"/>
</dbReference>
<dbReference type="PANTHER" id="PTHR11556:SF35">
    <property type="entry name" value="SEDOHEPTULOSE-1,7-BISPHOSPHATASE, CHLOROPLASTIC"/>
    <property type="match status" value="1"/>
</dbReference>
<dbReference type="Pfam" id="PF00316">
    <property type="entry name" value="FBPase"/>
    <property type="match status" value="1"/>
</dbReference>
<dbReference type="Pfam" id="PF18913">
    <property type="entry name" value="FBPase_C"/>
    <property type="match status" value="1"/>
</dbReference>
<dbReference type="PIRSF" id="PIRSF500210">
    <property type="entry name" value="FBPtase"/>
    <property type="match status" value="1"/>
</dbReference>
<dbReference type="PIRSF" id="PIRSF000904">
    <property type="entry name" value="FBPtase_SBPase"/>
    <property type="match status" value="1"/>
</dbReference>
<dbReference type="PRINTS" id="PR00115">
    <property type="entry name" value="F16BPHPHTASE"/>
</dbReference>
<dbReference type="SUPFAM" id="SSF56655">
    <property type="entry name" value="Carbohydrate phosphatase"/>
    <property type="match status" value="1"/>
</dbReference>
<dbReference type="PROSITE" id="PS00124">
    <property type="entry name" value="FBPASE"/>
    <property type="match status" value="1"/>
</dbReference>
<protein>
    <recommendedName>
        <fullName evidence="1">Fructose-1,6-bisphosphatase class 1 2</fullName>
        <shortName evidence="1">FBPase class 1 2</shortName>
        <ecNumber evidence="1">3.1.3.11</ecNumber>
    </recommendedName>
    <alternativeName>
        <fullName evidence="1">D-fructose-1,6-bisphosphate 1-phosphohydrolase class 1 2</fullName>
    </alternativeName>
</protein>
<name>F16A2_CUPNH</name>
<comment type="catalytic activity">
    <reaction evidence="1">
        <text>beta-D-fructose 1,6-bisphosphate + H2O = beta-D-fructose 6-phosphate + phosphate</text>
        <dbReference type="Rhea" id="RHEA:11064"/>
        <dbReference type="ChEBI" id="CHEBI:15377"/>
        <dbReference type="ChEBI" id="CHEBI:32966"/>
        <dbReference type="ChEBI" id="CHEBI:43474"/>
        <dbReference type="ChEBI" id="CHEBI:57634"/>
        <dbReference type="EC" id="3.1.3.11"/>
    </reaction>
</comment>
<comment type="cofactor">
    <cofactor evidence="1">
        <name>Mg(2+)</name>
        <dbReference type="ChEBI" id="CHEBI:18420"/>
    </cofactor>
    <text evidence="1">Binds 2 magnesium ions per subunit.</text>
</comment>
<comment type="pathway">
    <text evidence="1">Carbohydrate biosynthesis; gluconeogenesis.</text>
</comment>
<comment type="subunit">
    <text evidence="1">Homotetramer.</text>
</comment>
<comment type="subcellular location">
    <subcellularLocation>
        <location evidence="1">Cytoplasm</location>
    </subcellularLocation>
</comment>
<comment type="similarity">
    <text evidence="1">Belongs to the FBPase class 1 family.</text>
</comment>
<proteinExistence type="inferred from homology"/>
<evidence type="ECO:0000255" key="1">
    <source>
        <dbReference type="HAMAP-Rule" id="MF_01855"/>
    </source>
</evidence>
<sequence>MPEVQRMTLTQFLIEERRRYPDASGGFNGLILNVAMACKEIARAVAFGALGGLHGKASNQAGEAGAVNVQGEIQQKLDVLSNTTFLRVNEWGGYLAGMASEEMEAPYQIPDHYPRGKYLLVFDPLDGSSNIDVNVSVGSIFSVLRAPEGASAVTEQDFLQPGSAQVAAGYALYGPTTMLVLTVGNGVNGFTLDPNLGEFFLTHPNLQVPADTQEFAINASNSRFWEAPVQRYIAECMAGKSGPRGKDFNMRWIASMVAEAHRILMRGGVFMYPRDSKDPAKPGRLRLLYEANPIAFLMEQAGGRASTGRQTLMSVAPGALHQRIGVIFGSRNEVERIEGYHTDQTDPDLPSPLFNERSLFRASA</sequence>
<reference key="1">
    <citation type="journal article" date="1995" name="Curr. Microbiol.">
        <title>Analysis of the cbbF genes from Alcaligenes eutrophus that encode fructose-1,6-/sedoheptulose-1,7-bisphosphatase.</title>
        <authorList>
            <person name="Yoo J.-G."/>
            <person name="Bowien B."/>
        </authorList>
    </citation>
    <scope>NUCLEOTIDE SEQUENCE [GENOMIC DNA]</scope>
</reference>
<reference key="2">
    <citation type="journal article" date="2006" name="Nat. Biotechnol.">
        <title>Genome sequence of the bioplastic-producing 'Knallgas' bacterium Ralstonia eutropha H16.</title>
        <authorList>
            <person name="Pohlmann A."/>
            <person name="Fricke W.F."/>
            <person name="Reinecke F."/>
            <person name="Kusian B."/>
            <person name="Liesegang H."/>
            <person name="Cramm R."/>
            <person name="Eitinger T."/>
            <person name="Ewering C."/>
            <person name="Poetter M."/>
            <person name="Schwartz E."/>
            <person name="Strittmatter A."/>
            <person name="Voss I."/>
            <person name="Gottschalk G."/>
            <person name="Steinbuechel A."/>
            <person name="Friedrich B."/>
            <person name="Bowien B."/>
        </authorList>
    </citation>
    <scope>NUCLEOTIDE SEQUENCE [LARGE SCALE GENOMIC DNA]</scope>
    <source>
        <strain>ATCC 17699 / DSM 428 / KCTC 22496 / NCIMB 10442 / H16 / Stanier 337</strain>
    </source>
</reference>
<reference key="3">
    <citation type="journal article" date="1989" name="Gene">
        <title>Sequence analysis of the chromosomal and plasmid genes encoding phosphoribulokinase from Alcaligenes eutrophus.</title>
        <authorList>
            <person name="Kossmann J."/>
            <person name="Klintworth R."/>
            <person name="Bowien B."/>
        </authorList>
    </citation>
    <scope>NUCLEOTIDE SEQUENCE [GENOMIC DNA] OF 206-364</scope>
</reference>
<organism>
    <name type="scientific">Cupriavidus necator (strain ATCC 17699 / DSM 428 / KCTC 22496 / NCIMB 10442 / H16 / Stanier 337)</name>
    <name type="common">Ralstonia eutropha</name>
    <dbReference type="NCBI Taxonomy" id="381666"/>
    <lineage>
        <taxon>Bacteria</taxon>
        <taxon>Pseudomonadati</taxon>
        <taxon>Pseudomonadota</taxon>
        <taxon>Betaproteobacteria</taxon>
        <taxon>Burkholderiales</taxon>
        <taxon>Burkholderiaceae</taxon>
        <taxon>Cupriavidus</taxon>
    </lineage>
</organism>
<feature type="chain" id="PRO_0000200479" description="Fructose-1,6-bisphosphatase class 1 2">
    <location>
        <begin position="1"/>
        <end position="364"/>
    </location>
</feature>
<feature type="binding site" evidence="1">
    <location>
        <position position="101"/>
    </location>
    <ligand>
        <name>Mg(2+)</name>
        <dbReference type="ChEBI" id="CHEBI:18420"/>
        <label>1</label>
    </ligand>
</feature>
<feature type="binding site" evidence="1">
    <location>
        <position position="123"/>
    </location>
    <ligand>
        <name>Mg(2+)</name>
        <dbReference type="ChEBI" id="CHEBI:18420"/>
        <label>1</label>
    </ligand>
</feature>
<feature type="binding site" evidence="1">
    <location>
        <position position="123"/>
    </location>
    <ligand>
        <name>Mg(2+)</name>
        <dbReference type="ChEBI" id="CHEBI:18420"/>
        <label>2</label>
    </ligand>
</feature>
<feature type="binding site" evidence="1">
    <location>
        <position position="125"/>
    </location>
    <ligand>
        <name>Mg(2+)</name>
        <dbReference type="ChEBI" id="CHEBI:18420"/>
        <label>1</label>
    </ligand>
</feature>
<feature type="binding site" evidence="1">
    <location>
        <begin position="126"/>
        <end position="129"/>
    </location>
    <ligand>
        <name>substrate</name>
    </ligand>
</feature>
<feature type="binding site" evidence="1">
    <location>
        <position position="126"/>
    </location>
    <ligand>
        <name>Mg(2+)</name>
        <dbReference type="ChEBI" id="CHEBI:18420"/>
        <label>2</label>
    </ligand>
</feature>
<feature type="binding site" evidence="1">
    <location>
        <position position="218"/>
    </location>
    <ligand>
        <name>substrate</name>
    </ligand>
</feature>
<feature type="binding site" evidence="1">
    <location>
        <position position="290"/>
    </location>
    <ligand>
        <name>Mg(2+)</name>
        <dbReference type="ChEBI" id="CHEBI:18420"/>
        <label>2</label>
    </ligand>
</feature>